<protein>
    <recommendedName>
        <fullName>Translation initiation factor IF-2</fullName>
    </recommendedName>
</protein>
<gene>
    <name type="primary">infB</name>
    <name type="ordered locus">MPN_155</name>
    <name type="ORF">MP676</name>
</gene>
<accession>P75590</accession>
<reference key="1">
    <citation type="journal article" date="1996" name="Nucleic Acids Res.">
        <title>Complete sequence analysis of the genome of the bacterium Mycoplasma pneumoniae.</title>
        <authorList>
            <person name="Himmelreich R."/>
            <person name="Hilbert H."/>
            <person name="Plagens H."/>
            <person name="Pirkl E."/>
            <person name="Li B.-C."/>
            <person name="Herrmann R."/>
        </authorList>
    </citation>
    <scope>NUCLEOTIDE SEQUENCE [LARGE SCALE GENOMIC DNA]</scope>
    <source>
        <strain>ATCC 29342 / M129 / Subtype 1</strain>
    </source>
</reference>
<feature type="chain" id="PRO_0000137222" description="Translation initiation factor IF-2">
    <location>
        <begin position="1"/>
        <end position="617"/>
    </location>
</feature>
<feature type="domain" description="tr-type G">
    <location>
        <begin position="119"/>
        <end position="288"/>
    </location>
</feature>
<feature type="region of interest" description="Disordered" evidence="2">
    <location>
        <begin position="1"/>
        <end position="25"/>
    </location>
</feature>
<feature type="region of interest" description="G1" evidence="1">
    <location>
        <begin position="128"/>
        <end position="135"/>
    </location>
</feature>
<feature type="region of interest" description="G2" evidence="1">
    <location>
        <begin position="153"/>
        <end position="157"/>
    </location>
</feature>
<feature type="region of interest" description="G3" evidence="1">
    <location>
        <begin position="175"/>
        <end position="178"/>
    </location>
</feature>
<feature type="region of interest" description="G4" evidence="1">
    <location>
        <begin position="229"/>
        <end position="232"/>
    </location>
</feature>
<feature type="region of interest" description="G5" evidence="1">
    <location>
        <begin position="265"/>
        <end position="267"/>
    </location>
</feature>
<feature type="compositionally biased region" description="Basic residues" evidence="2">
    <location>
        <begin position="1"/>
        <end position="11"/>
    </location>
</feature>
<feature type="binding site" evidence="1">
    <location>
        <begin position="128"/>
        <end position="135"/>
    </location>
    <ligand>
        <name>GTP</name>
        <dbReference type="ChEBI" id="CHEBI:37565"/>
    </ligand>
</feature>
<feature type="binding site" evidence="1">
    <location>
        <begin position="175"/>
        <end position="179"/>
    </location>
    <ligand>
        <name>GTP</name>
        <dbReference type="ChEBI" id="CHEBI:37565"/>
    </ligand>
</feature>
<feature type="binding site" evidence="1">
    <location>
        <begin position="229"/>
        <end position="232"/>
    </location>
    <ligand>
        <name>GTP</name>
        <dbReference type="ChEBI" id="CHEBI:37565"/>
    </ligand>
</feature>
<name>IF2_MYCPN</name>
<evidence type="ECO:0000250" key="1"/>
<evidence type="ECO:0000256" key="2">
    <source>
        <dbReference type="SAM" id="MobiDB-lite"/>
    </source>
</evidence>
<evidence type="ECO:0000305" key="3"/>
<comment type="function">
    <text evidence="1">One of the essential components for the initiation of protein synthesis. Protects formylmethionyl-tRNA from spontaneous hydrolysis and promotes its binding to the 30S ribosomal subunits. Also involved in the hydrolysis of GTP during the formation of the 70S ribosomal complex (By similarity).</text>
</comment>
<comment type="subcellular location">
    <subcellularLocation>
        <location evidence="1">Cytoplasm</location>
    </subcellularLocation>
</comment>
<comment type="similarity">
    <text evidence="3">Belongs to the TRAFAC class translation factor GTPase superfamily. Classic translation factor GTPase family. IF-2 subfamily.</text>
</comment>
<organism>
    <name type="scientific">Mycoplasma pneumoniae (strain ATCC 29342 / M129 / Subtype 1)</name>
    <name type="common">Mycoplasmoides pneumoniae</name>
    <dbReference type="NCBI Taxonomy" id="272634"/>
    <lineage>
        <taxon>Bacteria</taxon>
        <taxon>Bacillati</taxon>
        <taxon>Mycoplasmatota</taxon>
        <taxon>Mycoplasmoidales</taxon>
        <taxon>Mycoplasmoidaceae</taxon>
        <taxon>Mycoplasmoides</taxon>
    </lineage>
</organism>
<proteinExistence type="inferred from homology"/>
<dbReference type="EMBL" id="U00089">
    <property type="protein sequence ID" value="AAB96324.1"/>
    <property type="molecule type" value="Genomic_DNA"/>
</dbReference>
<dbReference type="PIR" id="S74002">
    <property type="entry name" value="S74002"/>
</dbReference>
<dbReference type="RefSeq" id="NP_109843.1">
    <property type="nucleotide sequence ID" value="NC_000912.1"/>
</dbReference>
<dbReference type="RefSeq" id="WP_010874512.1">
    <property type="nucleotide sequence ID" value="NZ_OU342337.1"/>
</dbReference>
<dbReference type="SMR" id="P75590"/>
<dbReference type="IntAct" id="P75590">
    <property type="interactions" value="8"/>
</dbReference>
<dbReference type="STRING" id="272634.MPN_155"/>
<dbReference type="EnsemblBacteria" id="AAB96324">
    <property type="protein sequence ID" value="AAB96324"/>
    <property type="gene ID" value="MPN_155"/>
</dbReference>
<dbReference type="KEGG" id="mpn:MPN_155"/>
<dbReference type="PATRIC" id="fig|272634.6.peg.173"/>
<dbReference type="HOGENOM" id="CLU_006301_5_1_14"/>
<dbReference type="OrthoDB" id="9811804at2"/>
<dbReference type="BioCyc" id="MPNE272634:G1GJ3-262-MONOMER"/>
<dbReference type="Proteomes" id="UP000000808">
    <property type="component" value="Chromosome"/>
</dbReference>
<dbReference type="GO" id="GO:0005829">
    <property type="term" value="C:cytosol"/>
    <property type="evidence" value="ECO:0007669"/>
    <property type="project" value="TreeGrafter"/>
</dbReference>
<dbReference type="GO" id="GO:0005525">
    <property type="term" value="F:GTP binding"/>
    <property type="evidence" value="ECO:0007669"/>
    <property type="project" value="UniProtKB-KW"/>
</dbReference>
<dbReference type="GO" id="GO:0003924">
    <property type="term" value="F:GTPase activity"/>
    <property type="evidence" value="ECO:0007669"/>
    <property type="project" value="UniProtKB-UniRule"/>
</dbReference>
<dbReference type="GO" id="GO:0003743">
    <property type="term" value="F:translation initiation factor activity"/>
    <property type="evidence" value="ECO:0007669"/>
    <property type="project" value="UniProtKB-UniRule"/>
</dbReference>
<dbReference type="CDD" id="cd01887">
    <property type="entry name" value="IF2_eIF5B"/>
    <property type="match status" value="1"/>
</dbReference>
<dbReference type="CDD" id="cd03702">
    <property type="entry name" value="IF2_mtIF2_II"/>
    <property type="match status" value="1"/>
</dbReference>
<dbReference type="CDD" id="cd03692">
    <property type="entry name" value="mtIF2_IVc"/>
    <property type="match status" value="1"/>
</dbReference>
<dbReference type="FunFam" id="2.40.30.10:FF:000008">
    <property type="entry name" value="Translation initiation factor IF-2"/>
    <property type="match status" value="1"/>
</dbReference>
<dbReference type="FunFam" id="2.40.30.10:FF:000054">
    <property type="entry name" value="Translation initiation factor IF-2"/>
    <property type="match status" value="1"/>
</dbReference>
<dbReference type="FunFam" id="3.40.50.10050:FF:000001">
    <property type="entry name" value="Translation initiation factor IF-2"/>
    <property type="match status" value="1"/>
</dbReference>
<dbReference type="FunFam" id="3.40.50.300:FF:000019">
    <property type="entry name" value="Translation initiation factor IF-2"/>
    <property type="match status" value="1"/>
</dbReference>
<dbReference type="Gene3D" id="3.40.50.300">
    <property type="entry name" value="P-loop containing nucleotide triphosphate hydrolases"/>
    <property type="match status" value="1"/>
</dbReference>
<dbReference type="Gene3D" id="2.40.30.10">
    <property type="entry name" value="Translation factors"/>
    <property type="match status" value="2"/>
</dbReference>
<dbReference type="Gene3D" id="3.40.50.10050">
    <property type="entry name" value="Translation initiation factor IF- 2, domain 3"/>
    <property type="match status" value="1"/>
</dbReference>
<dbReference type="HAMAP" id="MF_00100_B">
    <property type="entry name" value="IF_2_B"/>
    <property type="match status" value="1"/>
</dbReference>
<dbReference type="InterPro" id="IPR053905">
    <property type="entry name" value="EF-G-like_DII"/>
</dbReference>
<dbReference type="InterPro" id="IPR004161">
    <property type="entry name" value="EFTu-like_2"/>
</dbReference>
<dbReference type="InterPro" id="IPR044145">
    <property type="entry name" value="IF2_II"/>
</dbReference>
<dbReference type="InterPro" id="IPR027417">
    <property type="entry name" value="P-loop_NTPase"/>
</dbReference>
<dbReference type="InterPro" id="IPR005225">
    <property type="entry name" value="Small_GTP-bd"/>
</dbReference>
<dbReference type="InterPro" id="IPR000795">
    <property type="entry name" value="T_Tr_GTP-bd_dom"/>
</dbReference>
<dbReference type="InterPro" id="IPR000178">
    <property type="entry name" value="TF_IF2_bacterial-like"/>
</dbReference>
<dbReference type="InterPro" id="IPR015760">
    <property type="entry name" value="TIF_IF2"/>
</dbReference>
<dbReference type="InterPro" id="IPR023115">
    <property type="entry name" value="TIF_IF2_dom3"/>
</dbReference>
<dbReference type="InterPro" id="IPR036925">
    <property type="entry name" value="TIF_IF2_dom3_sf"/>
</dbReference>
<dbReference type="InterPro" id="IPR009000">
    <property type="entry name" value="Transl_B-barrel_sf"/>
</dbReference>
<dbReference type="NCBIfam" id="TIGR00487">
    <property type="entry name" value="IF-2"/>
    <property type="match status" value="1"/>
</dbReference>
<dbReference type="NCBIfam" id="TIGR00231">
    <property type="entry name" value="small_GTP"/>
    <property type="match status" value="1"/>
</dbReference>
<dbReference type="PANTHER" id="PTHR43381:SF5">
    <property type="entry name" value="TR-TYPE G DOMAIN-CONTAINING PROTEIN"/>
    <property type="match status" value="1"/>
</dbReference>
<dbReference type="PANTHER" id="PTHR43381">
    <property type="entry name" value="TRANSLATION INITIATION FACTOR IF-2-RELATED"/>
    <property type="match status" value="1"/>
</dbReference>
<dbReference type="Pfam" id="PF22042">
    <property type="entry name" value="EF-G_D2"/>
    <property type="match status" value="1"/>
</dbReference>
<dbReference type="Pfam" id="PF00009">
    <property type="entry name" value="GTP_EFTU"/>
    <property type="match status" value="1"/>
</dbReference>
<dbReference type="Pfam" id="PF03144">
    <property type="entry name" value="GTP_EFTU_D2"/>
    <property type="match status" value="1"/>
</dbReference>
<dbReference type="Pfam" id="PF11987">
    <property type="entry name" value="IF-2"/>
    <property type="match status" value="1"/>
</dbReference>
<dbReference type="SUPFAM" id="SSF52156">
    <property type="entry name" value="Initiation factor IF2/eIF5b, domain 3"/>
    <property type="match status" value="1"/>
</dbReference>
<dbReference type="SUPFAM" id="SSF52540">
    <property type="entry name" value="P-loop containing nucleoside triphosphate hydrolases"/>
    <property type="match status" value="1"/>
</dbReference>
<dbReference type="SUPFAM" id="SSF50447">
    <property type="entry name" value="Translation proteins"/>
    <property type="match status" value="2"/>
</dbReference>
<dbReference type="PROSITE" id="PS51722">
    <property type="entry name" value="G_TR_2"/>
    <property type="match status" value="1"/>
</dbReference>
<dbReference type="PROSITE" id="PS01176">
    <property type="entry name" value="IF2"/>
    <property type="match status" value="1"/>
</dbReference>
<sequence>MSKHKPRHFQKNKFDNRAKTSAKQQFRQVKTGVKDGVFVYKGPLTVSEFCLKTNIPTANIIKHFFLNGVPLTLNSVLSTEQLADACVNFGFDFKVETEITHDNIISNIKFDDDPTQLSPRPPIVTIMGHVDHGKTSLLDAIRQTNTAAKEFGGITQKIGAYQVKNQEGKTITFIDTPGHEAFTGMRARGAQVTDIVVLVVAGDDGLKQQTEEAISHAKSAKTPIIVFINKMDKPTANPDMVIQQLNKFDLVPEEWGGDTIFVKGSALTKEGIQELLDSILLVAEVEDYKANFNAHSSGYAIEVQTTKGLGPTATIIVKRGTLKIGDIVVLGPAWGKVRTMQDENGVHLQEAMPSKPVQISGFDIVPVAGEKFIVFDDEKDAKLIANKFREQQKQKLNTTQINEELKQKIKSKEIKVLNLIFKVDSDGSLAAIKQAMQSIDVPGMSVNIIHSGVGLISENDIMLAKASGALLFSLNLGLSQVVKNIASLQGVKVDVHYHIPKLAEEIENILKGQLEPVYEDVELGRAEVLQLWYHSKVGHIAGTLVKTGKVKRGALCKLLRRNETIYEGRVDSLKSEKNPVNQMEAGKNCGIVINGCEDIQVCDIILVYEKQEVKSKS</sequence>
<keyword id="KW-0963">Cytoplasm</keyword>
<keyword id="KW-0342">GTP-binding</keyword>
<keyword id="KW-0396">Initiation factor</keyword>
<keyword id="KW-0547">Nucleotide-binding</keyword>
<keyword id="KW-0648">Protein biosynthesis</keyword>
<keyword id="KW-1185">Reference proteome</keyword>